<keyword id="KW-1003">Cell membrane</keyword>
<keyword id="KW-0350">Heme biosynthesis</keyword>
<keyword id="KW-0408">Iron</keyword>
<keyword id="KW-0472">Membrane</keyword>
<keyword id="KW-0479">Metal-binding</keyword>
<keyword id="KW-0560">Oxidoreductase</keyword>
<keyword id="KW-1185">Reference proteome</keyword>
<keyword id="KW-0812">Transmembrane</keyword>
<keyword id="KW-1133">Transmembrane helix</keyword>
<dbReference type="EC" id="1.17.99.9" evidence="1"/>
<dbReference type="EMBL" id="CP000449">
    <property type="protein sequence ID" value="ABI65811.1"/>
    <property type="molecule type" value="Genomic_DNA"/>
</dbReference>
<dbReference type="RefSeq" id="WP_011643458.1">
    <property type="nucleotide sequence ID" value="NC_008347.1"/>
</dbReference>
<dbReference type="SMR" id="Q0APH6"/>
<dbReference type="STRING" id="394221.Mmar10_1519"/>
<dbReference type="KEGG" id="mmr:Mmar10_1519"/>
<dbReference type="eggNOG" id="COG1612">
    <property type="taxonomic scope" value="Bacteria"/>
</dbReference>
<dbReference type="HOGENOM" id="CLU_017627_0_0_5"/>
<dbReference type="OrthoDB" id="9793156at2"/>
<dbReference type="UniPathway" id="UPA00269">
    <property type="reaction ID" value="UER00713"/>
</dbReference>
<dbReference type="Proteomes" id="UP000001964">
    <property type="component" value="Chromosome"/>
</dbReference>
<dbReference type="GO" id="GO:0005886">
    <property type="term" value="C:plasma membrane"/>
    <property type="evidence" value="ECO:0007669"/>
    <property type="project" value="UniProtKB-SubCell"/>
</dbReference>
<dbReference type="GO" id="GO:0046872">
    <property type="term" value="F:metal ion binding"/>
    <property type="evidence" value="ECO:0007669"/>
    <property type="project" value="UniProtKB-KW"/>
</dbReference>
<dbReference type="GO" id="GO:0016653">
    <property type="term" value="F:oxidoreductase activity, acting on NAD(P)H, heme protein as acceptor"/>
    <property type="evidence" value="ECO:0007669"/>
    <property type="project" value="InterPro"/>
</dbReference>
<dbReference type="GO" id="GO:0006784">
    <property type="term" value="P:heme A biosynthetic process"/>
    <property type="evidence" value="ECO:0007669"/>
    <property type="project" value="UniProtKB-UniRule"/>
</dbReference>
<dbReference type="HAMAP" id="MF_01665">
    <property type="entry name" value="HemeA_synth_type2"/>
    <property type="match status" value="1"/>
</dbReference>
<dbReference type="InterPro" id="IPR003780">
    <property type="entry name" value="COX15/CtaA_fam"/>
</dbReference>
<dbReference type="InterPro" id="IPR023754">
    <property type="entry name" value="HemeA_Synthase_type2"/>
</dbReference>
<dbReference type="PANTHER" id="PTHR23289">
    <property type="entry name" value="CYTOCHROME C OXIDASE ASSEMBLY PROTEIN COX15"/>
    <property type="match status" value="1"/>
</dbReference>
<dbReference type="PANTHER" id="PTHR23289:SF2">
    <property type="entry name" value="CYTOCHROME C OXIDASE ASSEMBLY PROTEIN COX15 HOMOLOG"/>
    <property type="match status" value="1"/>
</dbReference>
<dbReference type="Pfam" id="PF02628">
    <property type="entry name" value="COX15-CtaA"/>
    <property type="match status" value="1"/>
</dbReference>
<sequence length="341" mass="37712">MPYHSSTKSRAVSTWLLVVAALVCAMIIIGGTTRLTDSGLSITEWKPISGAIPPLSQQDWQDEFALYQQTTEFQVQNSAMTLDEFEFIFWWEWGHRQLGRLIGLVYFVPFVFFWMRGHLSARLKSRLFGLFLLGGAQGAIGWWMVASGLSDRLDVSQYRLATHLGMAFVILGLSIWFSLEARHGPPPLRRGRLAGVTAGLLGLVFVQIILGAFVAGLDAGRIYNTWPLMNGDLIPEGYLGGMNFFPAIFESHAAVQMHHRWTGYLVALGVFAYAWQVWREPRVSLKPFMVILPALVIGQIALGIAALLAVVPLSLSLAHQAGAILLFIAMVAAAWTARRAV</sequence>
<organism>
    <name type="scientific">Maricaulis maris (strain MCS10)</name>
    <name type="common">Caulobacter maris</name>
    <dbReference type="NCBI Taxonomy" id="394221"/>
    <lineage>
        <taxon>Bacteria</taxon>
        <taxon>Pseudomonadati</taxon>
        <taxon>Pseudomonadota</taxon>
        <taxon>Alphaproteobacteria</taxon>
        <taxon>Maricaulales</taxon>
        <taxon>Maricaulaceae</taxon>
        <taxon>Maricaulis</taxon>
    </lineage>
</organism>
<feature type="chain" id="PRO_0000349042" description="Heme A synthase">
    <location>
        <begin position="1"/>
        <end position="341"/>
    </location>
</feature>
<feature type="transmembrane region" description="Helical" evidence="1">
    <location>
        <begin position="11"/>
        <end position="31"/>
    </location>
</feature>
<feature type="transmembrane region" description="Helical" evidence="1">
    <location>
        <begin position="101"/>
        <end position="121"/>
    </location>
</feature>
<feature type="transmembrane region" description="Helical" evidence="1">
    <location>
        <begin position="127"/>
        <end position="147"/>
    </location>
</feature>
<feature type="transmembrane region" description="Helical" evidence="1">
    <location>
        <begin position="160"/>
        <end position="180"/>
    </location>
</feature>
<feature type="transmembrane region" description="Helical" evidence="1">
    <location>
        <begin position="194"/>
        <end position="214"/>
    </location>
</feature>
<feature type="transmembrane region" description="Helical" evidence="1">
    <location>
        <begin position="261"/>
        <end position="278"/>
    </location>
</feature>
<feature type="transmembrane region" description="Helical" evidence="1">
    <location>
        <begin position="288"/>
        <end position="308"/>
    </location>
</feature>
<feature type="transmembrane region" description="Helical" evidence="1">
    <location>
        <begin position="315"/>
        <end position="335"/>
    </location>
</feature>
<feature type="binding site" description="axial binding residue" evidence="1">
    <location>
        <position position="259"/>
    </location>
    <ligand>
        <name>heme</name>
        <dbReference type="ChEBI" id="CHEBI:30413"/>
    </ligand>
    <ligandPart>
        <name>Fe</name>
        <dbReference type="ChEBI" id="CHEBI:18248"/>
    </ligandPart>
</feature>
<feature type="binding site" description="axial binding residue" evidence="1">
    <location>
        <position position="319"/>
    </location>
    <ligand>
        <name>heme</name>
        <dbReference type="ChEBI" id="CHEBI:30413"/>
    </ligand>
    <ligandPart>
        <name>Fe</name>
        <dbReference type="ChEBI" id="CHEBI:18248"/>
    </ligandPart>
</feature>
<accession>Q0APH6</accession>
<comment type="function">
    <text evidence="1">Catalyzes the conversion of heme O to heme A by two successive hydroxylations of the methyl group at C8. The first hydroxylation forms heme I, the second hydroxylation results in an unstable dihydroxymethyl group, which spontaneously dehydrates, resulting in the formyl group of heme A.</text>
</comment>
<comment type="catalytic activity">
    <reaction evidence="1">
        <text>Fe(II)-heme o + 2 A + H2O = Fe(II)-heme a + 2 AH2</text>
        <dbReference type="Rhea" id="RHEA:63388"/>
        <dbReference type="ChEBI" id="CHEBI:13193"/>
        <dbReference type="ChEBI" id="CHEBI:15377"/>
        <dbReference type="ChEBI" id="CHEBI:17499"/>
        <dbReference type="ChEBI" id="CHEBI:60530"/>
        <dbReference type="ChEBI" id="CHEBI:61715"/>
        <dbReference type="EC" id="1.17.99.9"/>
    </reaction>
    <physiologicalReaction direction="left-to-right" evidence="1">
        <dbReference type="Rhea" id="RHEA:63389"/>
    </physiologicalReaction>
</comment>
<comment type="cofactor">
    <cofactor evidence="1">
        <name>heme b</name>
        <dbReference type="ChEBI" id="CHEBI:60344"/>
    </cofactor>
</comment>
<comment type="pathway">
    <text evidence="1">Porphyrin-containing compound metabolism; heme A biosynthesis; heme A from heme O: step 1/1.</text>
</comment>
<comment type="subunit">
    <text evidence="1">Interacts with CtaB.</text>
</comment>
<comment type="subcellular location">
    <subcellularLocation>
        <location evidence="1">Cell membrane</location>
        <topology evidence="1">Multi-pass membrane protein</topology>
    </subcellularLocation>
</comment>
<comment type="similarity">
    <text evidence="1">Belongs to the COX15/CtaA family. Type 2 subfamily.</text>
</comment>
<protein>
    <recommendedName>
        <fullName evidence="1">Heme A synthase</fullName>
        <shortName evidence="1">HAS</shortName>
        <ecNumber evidence="1">1.17.99.9</ecNumber>
    </recommendedName>
    <alternativeName>
        <fullName evidence="1">Cytochrome aa3-controlling protein</fullName>
    </alternativeName>
</protein>
<proteinExistence type="inferred from homology"/>
<name>CTAA_MARMM</name>
<gene>
    <name evidence="1" type="primary">ctaA</name>
    <name type="ordered locus">Mmar10_1519</name>
</gene>
<evidence type="ECO:0000255" key="1">
    <source>
        <dbReference type="HAMAP-Rule" id="MF_01665"/>
    </source>
</evidence>
<reference key="1">
    <citation type="submission" date="2006-08" db="EMBL/GenBank/DDBJ databases">
        <title>Complete sequence of Maricaulis maris MCS10.</title>
        <authorList>
            <consortium name="US DOE Joint Genome Institute"/>
            <person name="Copeland A."/>
            <person name="Lucas S."/>
            <person name="Lapidus A."/>
            <person name="Barry K."/>
            <person name="Detter J.C."/>
            <person name="Glavina del Rio T."/>
            <person name="Hammon N."/>
            <person name="Israni S."/>
            <person name="Dalin E."/>
            <person name="Tice H."/>
            <person name="Pitluck S."/>
            <person name="Saunders E."/>
            <person name="Brettin T."/>
            <person name="Bruce D."/>
            <person name="Han C."/>
            <person name="Tapia R."/>
            <person name="Gilna P."/>
            <person name="Schmutz J."/>
            <person name="Larimer F."/>
            <person name="Land M."/>
            <person name="Hauser L."/>
            <person name="Kyrpides N."/>
            <person name="Mikhailova N."/>
            <person name="Viollier P."/>
            <person name="Stephens C."/>
            <person name="Richardson P."/>
        </authorList>
    </citation>
    <scope>NUCLEOTIDE SEQUENCE [LARGE SCALE GENOMIC DNA]</scope>
    <source>
        <strain>MCS10</strain>
    </source>
</reference>